<keyword id="KW-0002">3D-structure</keyword>
<keyword id="KW-0963">Cytoplasm</keyword>
<keyword id="KW-1185">Reference proteome</keyword>
<keyword id="KW-0687">Ribonucleoprotein</keyword>
<keyword id="KW-0689">Ribosomal protein</keyword>
<feature type="chain" id="PRO_0000383129" description="Large ribosomal subunit protein uL1">
    <location>
        <begin position="1"/>
        <end position="219"/>
    </location>
</feature>
<dbReference type="EMBL" id="AL590445">
    <property type="protein sequence ID" value="CAD26579.1"/>
    <property type="molecule type" value="Genomic_DNA"/>
</dbReference>
<dbReference type="RefSeq" id="NP_597402.1">
    <property type="nucleotide sequence ID" value="NM_001041268.1"/>
</dbReference>
<dbReference type="PDB" id="7QEP">
    <property type="method" value="EM"/>
    <property type="resolution" value="2.70 A"/>
    <property type="chains" value="L1=1-219"/>
</dbReference>
<dbReference type="PDBsum" id="7QEP"/>
<dbReference type="EMDB" id="EMD-13936"/>
<dbReference type="SMR" id="Q8SRY5"/>
<dbReference type="FunCoup" id="Q8SRY5">
    <property type="interactions" value="206"/>
</dbReference>
<dbReference type="STRING" id="284813.Q8SRY5"/>
<dbReference type="GeneID" id="859067"/>
<dbReference type="KEGG" id="ecu:ECU05_0600"/>
<dbReference type="VEuPathDB" id="MicrosporidiaDB:ECU05_0600"/>
<dbReference type="HOGENOM" id="CLU_062853_3_1_1"/>
<dbReference type="InParanoid" id="Q8SRY5"/>
<dbReference type="OMA" id="CVGHVNM"/>
<dbReference type="OrthoDB" id="2449818at2759"/>
<dbReference type="Proteomes" id="UP000000819">
    <property type="component" value="Chromosome V"/>
</dbReference>
<dbReference type="GO" id="GO:0005737">
    <property type="term" value="C:cytoplasm"/>
    <property type="evidence" value="ECO:0007669"/>
    <property type="project" value="UniProtKB-SubCell"/>
</dbReference>
<dbReference type="GO" id="GO:0015934">
    <property type="term" value="C:large ribosomal subunit"/>
    <property type="evidence" value="ECO:0007669"/>
    <property type="project" value="InterPro"/>
</dbReference>
<dbReference type="GO" id="GO:0003723">
    <property type="term" value="F:RNA binding"/>
    <property type="evidence" value="ECO:0007669"/>
    <property type="project" value="InterPro"/>
</dbReference>
<dbReference type="GO" id="GO:0003735">
    <property type="term" value="F:structural constituent of ribosome"/>
    <property type="evidence" value="ECO:0007669"/>
    <property type="project" value="InterPro"/>
</dbReference>
<dbReference type="GO" id="GO:0006412">
    <property type="term" value="P:translation"/>
    <property type="evidence" value="ECO:0007669"/>
    <property type="project" value="InterPro"/>
</dbReference>
<dbReference type="CDD" id="cd00403">
    <property type="entry name" value="Ribosomal_L1"/>
    <property type="match status" value="1"/>
</dbReference>
<dbReference type="Gene3D" id="3.30.190.20">
    <property type="match status" value="1"/>
</dbReference>
<dbReference type="Gene3D" id="3.40.50.790">
    <property type="match status" value="1"/>
</dbReference>
<dbReference type="InterPro" id="IPR002143">
    <property type="entry name" value="Ribosomal_uL1"/>
</dbReference>
<dbReference type="InterPro" id="IPR023674">
    <property type="entry name" value="Ribosomal_uL1-like"/>
</dbReference>
<dbReference type="InterPro" id="IPR028364">
    <property type="entry name" value="Ribosomal_uL1/biogenesis"/>
</dbReference>
<dbReference type="InterPro" id="IPR016095">
    <property type="entry name" value="Ribosomal_uL1_3-a/b-sand"/>
</dbReference>
<dbReference type="Pfam" id="PF00687">
    <property type="entry name" value="Ribosomal_L1"/>
    <property type="match status" value="1"/>
</dbReference>
<dbReference type="PIRSF" id="PIRSF002155">
    <property type="entry name" value="Ribosomal_L1"/>
    <property type="match status" value="1"/>
</dbReference>
<dbReference type="SUPFAM" id="SSF56808">
    <property type="entry name" value="Ribosomal protein L1"/>
    <property type="match status" value="1"/>
</dbReference>
<reference key="1">
    <citation type="journal article" date="2001" name="Nature">
        <title>Genome sequence and gene compaction of the eukaryote parasite Encephalitozoon cuniculi.</title>
        <authorList>
            <person name="Katinka M.D."/>
            <person name="Duprat S."/>
            <person name="Cornillot E."/>
            <person name="Metenier G."/>
            <person name="Thomarat F."/>
            <person name="Prensier G."/>
            <person name="Barbe V."/>
            <person name="Peyretaillade E."/>
            <person name="Brottier P."/>
            <person name="Wincker P."/>
            <person name="Delbac F."/>
            <person name="El Alaoui H."/>
            <person name="Peyret P."/>
            <person name="Saurin W."/>
            <person name="Gouy M."/>
            <person name="Weissenbach J."/>
            <person name="Vivares C.P."/>
        </authorList>
    </citation>
    <scope>NUCLEOTIDE SEQUENCE [LARGE SCALE GENOMIC DNA]</scope>
    <source>
        <strain>GB-M1</strain>
    </source>
</reference>
<reference key="2">
    <citation type="journal article" date="2006" name="Proteomics">
        <title>Proteomic analysis of the eukaryotic parasite Encephalitozoon cuniculi (microsporidia): a reference map for proteins expressed in late sporogonial stages.</title>
        <authorList>
            <person name="Brosson D."/>
            <person name="Kuhn L."/>
            <person name="Delbac F."/>
            <person name="Garin J."/>
            <person name="Vivares C.P."/>
            <person name="Texier C."/>
        </authorList>
    </citation>
    <scope>IDENTIFICATION BY MASS SPECTROMETRY [LARGE SCALE ANALYSIS]</scope>
    <scope>DEVELOPMENTAL STAGE</scope>
</reference>
<name>RL1_ENCCU</name>
<gene>
    <name type="primary">RPL1</name>
    <name type="ordered locus">ECU05_0600</name>
</gene>
<evidence type="ECO:0000250" key="1"/>
<evidence type="ECO:0000269" key="2">
    <source>
    </source>
</evidence>
<evidence type="ECO:0000305" key="3"/>
<organism>
    <name type="scientific">Encephalitozoon cuniculi (strain GB-M1)</name>
    <name type="common">Microsporidian parasite</name>
    <dbReference type="NCBI Taxonomy" id="284813"/>
    <lineage>
        <taxon>Eukaryota</taxon>
        <taxon>Fungi</taxon>
        <taxon>Fungi incertae sedis</taxon>
        <taxon>Microsporidia</taxon>
        <taxon>Unikaryonidae</taxon>
        <taxon>Encephalitozoon</taxon>
    </lineage>
</organism>
<protein>
    <recommendedName>
        <fullName evidence="3">Large ribosomal subunit protein uL1</fullName>
    </recommendedName>
    <alternativeName>
        <fullName>60S ribosomal protein L1</fullName>
    </alternativeName>
    <alternativeName>
        <fullName>L10a</fullName>
    </alternativeName>
</protein>
<accession>Q8SRY5</accession>
<comment type="subunit">
    <text evidence="1">Component of the large ribosomal subunit.</text>
</comment>
<comment type="subcellular location">
    <subcellularLocation>
        <location evidence="1">Cytoplasm</location>
    </subcellularLocation>
</comment>
<comment type="developmental stage">
    <text evidence="2">Expressed in late sporogonial stages.</text>
</comment>
<comment type="similarity">
    <text evidence="3">Belongs to the universal ribosomal protein uL1 family.</text>
</comment>
<proteinExistence type="evidence at protein level"/>
<sequence length="219" mass="24717">MSKQAEEEQLAFLDSGRIIGIINQLKESEDPEKIVTIQIQVNLKGFDPRKDNKVSKDMVLPYRVRSLDKTIVIADEAHVKVCIDANLPYVPIDEISGDDKKDIRESVLKKNKFFILCPGYNKIYQLKNILRCGKTPHILRNGDDINAVFETGKKSCKLRIQDDFSVTSFTVGHTGMDSEHIYENIKVGMGLLVSYLKNGSQNLKGVMIKTDQSPPVTLY</sequence>